<comment type="miscellaneous">
    <text>Encoded by the cryptic lambdoid prophage DLP12.</text>
</comment>
<comment type="caution">
    <text evidence="1">Could be the product of a pseudogene. The original protein is truncated by an IS3C element.</text>
</comment>
<proteinExistence type="uncertain"/>
<gene>
    <name type="primary">renD</name>
    <name type="ordered locus">b0542</name>
    <name type="ordered locus">JW0530</name>
</gene>
<evidence type="ECO:0000305" key="1"/>
<sequence length="61" mass="7173">MARAGILVVDGKVWRTVYYRFATREEWEGKVSTNLIFKECRQSAAMKRVLRVYKRTSMGTQ</sequence>
<keyword id="KW-1185">Reference proteome</keyword>
<protein>
    <recommendedName>
        <fullName evidence="1">Putative protein RenD</fullName>
    </recommendedName>
    <alternativeName>
        <fullName>Putative defective protein Ren from DLP12 prophage</fullName>
    </alternativeName>
</protein>
<dbReference type="EMBL" id="U82598">
    <property type="protein sequence ID" value="AAB40739.1"/>
    <property type="molecule type" value="Genomic_DNA"/>
</dbReference>
<dbReference type="EMBL" id="U00096">
    <property type="status" value="NOT_ANNOTATED_CDS"/>
    <property type="molecule type" value="Genomic_DNA"/>
</dbReference>
<dbReference type="EMBL" id="AP009048">
    <property type="protein sequence ID" value="BAE76317.1"/>
    <property type="molecule type" value="Genomic_DNA"/>
</dbReference>
<dbReference type="PIR" id="D64786">
    <property type="entry name" value="D64786"/>
</dbReference>
<dbReference type="BioGRID" id="4259367">
    <property type="interactions" value="51"/>
</dbReference>
<dbReference type="DIP" id="DIP-48094N"/>
<dbReference type="FunCoup" id="P75718">
    <property type="interactions" value="4"/>
</dbReference>
<dbReference type="KEGG" id="ecj:JW0530"/>
<dbReference type="HOGENOM" id="CLU_2915097_0_0_6"/>
<dbReference type="InParanoid" id="P75718"/>
<dbReference type="OMA" id="FCAQDVS"/>
<dbReference type="Proteomes" id="UP000000625">
    <property type="component" value="Chromosome"/>
</dbReference>
<organism>
    <name type="scientific">Escherichia coli (strain K12)</name>
    <dbReference type="NCBI Taxonomy" id="83333"/>
    <lineage>
        <taxon>Bacteria</taxon>
        <taxon>Pseudomonadati</taxon>
        <taxon>Pseudomonadota</taxon>
        <taxon>Gammaproteobacteria</taxon>
        <taxon>Enterobacterales</taxon>
        <taxon>Enterobacteriaceae</taxon>
        <taxon>Escherichia</taxon>
    </lineage>
</organism>
<reference key="1">
    <citation type="submission" date="1997-01" db="EMBL/GenBank/DDBJ databases">
        <title>Sequence of minutes 4-25 of Escherichia coli.</title>
        <authorList>
            <person name="Chung E."/>
            <person name="Allen E."/>
            <person name="Araujo R."/>
            <person name="Aparicio A.M."/>
            <person name="Davis K."/>
            <person name="Duncan M."/>
            <person name="Federspiel N."/>
            <person name="Hyman R."/>
            <person name="Kalman S."/>
            <person name="Komp C."/>
            <person name="Kurdi O."/>
            <person name="Lew H."/>
            <person name="Lin D."/>
            <person name="Namath A."/>
            <person name="Oefner P."/>
            <person name="Roberts D."/>
            <person name="Schramm S."/>
            <person name="Davis R.W."/>
        </authorList>
    </citation>
    <scope>NUCLEOTIDE SEQUENCE [LARGE SCALE GENOMIC DNA]</scope>
    <source>
        <strain>K12 / MG1655 / ATCC 47076</strain>
    </source>
</reference>
<reference key="2">
    <citation type="journal article" date="1997" name="Science">
        <title>The complete genome sequence of Escherichia coli K-12.</title>
        <authorList>
            <person name="Blattner F.R."/>
            <person name="Plunkett G. III"/>
            <person name="Bloch C.A."/>
            <person name="Perna N.T."/>
            <person name="Burland V."/>
            <person name="Riley M."/>
            <person name="Collado-Vides J."/>
            <person name="Glasner J.D."/>
            <person name="Rode C.K."/>
            <person name="Mayhew G.F."/>
            <person name="Gregor J."/>
            <person name="Davis N.W."/>
            <person name="Kirkpatrick H.A."/>
            <person name="Goeden M.A."/>
            <person name="Rose D.J."/>
            <person name="Mau B."/>
            <person name="Shao Y."/>
        </authorList>
    </citation>
    <scope>NUCLEOTIDE SEQUENCE [LARGE SCALE GENOMIC DNA]</scope>
    <source>
        <strain>K12 / MG1655 / ATCC 47076</strain>
    </source>
</reference>
<reference key="3">
    <citation type="journal article" date="2006" name="Mol. Syst. Biol.">
        <title>Highly accurate genome sequences of Escherichia coli K-12 strains MG1655 and W3110.</title>
        <authorList>
            <person name="Hayashi K."/>
            <person name="Morooka N."/>
            <person name="Yamamoto Y."/>
            <person name="Fujita K."/>
            <person name="Isono K."/>
            <person name="Choi S."/>
            <person name="Ohtsubo E."/>
            <person name="Baba T."/>
            <person name="Wanner B.L."/>
            <person name="Mori H."/>
            <person name="Horiuchi T."/>
        </authorList>
    </citation>
    <scope>NUCLEOTIDE SEQUENCE [LARGE SCALE GENOMIC DNA]</scope>
    <source>
        <strain>K12 / W3110 / ATCC 27325 / DSM 5911</strain>
    </source>
</reference>
<accession>P75718</accession>
<accession>P77082</accession>
<accession>Q2MBN9</accession>
<name>REND_ECOLI</name>
<feature type="chain" id="PRO_0000252140" description="Putative protein RenD">
    <location>
        <begin position="1"/>
        <end position="61"/>
    </location>
</feature>